<dbReference type="EMBL" id="CP000251">
    <property type="protein sequence ID" value="ABC81711.1"/>
    <property type="molecule type" value="Genomic_DNA"/>
</dbReference>
<dbReference type="RefSeq" id="WP_011420994.1">
    <property type="nucleotide sequence ID" value="NC_007760.1"/>
</dbReference>
<dbReference type="SMR" id="Q2IJ82"/>
<dbReference type="STRING" id="290397.Adeh_1940"/>
<dbReference type="KEGG" id="ade:Adeh_1940"/>
<dbReference type="eggNOG" id="COG0092">
    <property type="taxonomic scope" value="Bacteria"/>
</dbReference>
<dbReference type="HOGENOM" id="CLU_058591_0_2_7"/>
<dbReference type="OrthoDB" id="9806396at2"/>
<dbReference type="Proteomes" id="UP000001935">
    <property type="component" value="Chromosome"/>
</dbReference>
<dbReference type="GO" id="GO:0022627">
    <property type="term" value="C:cytosolic small ribosomal subunit"/>
    <property type="evidence" value="ECO:0007669"/>
    <property type="project" value="TreeGrafter"/>
</dbReference>
<dbReference type="GO" id="GO:0003729">
    <property type="term" value="F:mRNA binding"/>
    <property type="evidence" value="ECO:0007669"/>
    <property type="project" value="UniProtKB-UniRule"/>
</dbReference>
<dbReference type="GO" id="GO:0019843">
    <property type="term" value="F:rRNA binding"/>
    <property type="evidence" value="ECO:0007669"/>
    <property type="project" value="UniProtKB-UniRule"/>
</dbReference>
<dbReference type="GO" id="GO:0003735">
    <property type="term" value="F:structural constituent of ribosome"/>
    <property type="evidence" value="ECO:0007669"/>
    <property type="project" value="InterPro"/>
</dbReference>
<dbReference type="GO" id="GO:0006412">
    <property type="term" value="P:translation"/>
    <property type="evidence" value="ECO:0007669"/>
    <property type="project" value="UniProtKB-UniRule"/>
</dbReference>
<dbReference type="CDD" id="cd02412">
    <property type="entry name" value="KH-II_30S_S3"/>
    <property type="match status" value="1"/>
</dbReference>
<dbReference type="FunFam" id="3.30.1140.32:FF:000002">
    <property type="entry name" value="30S ribosomal protein S3"/>
    <property type="match status" value="1"/>
</dbReference>
<dbReference type="FunFam" id="3.30.300.20:FF:000001">
    <property type="entry name" value="30S ribosomal protein S3"/>
    <property type="match status" value="1"/>
</dbReference>
<dbReference type="Gene3D" id="3.30.300.20">
    <property type="match status" value="1"/>
</dbReference>
<dbReference type="Gene3D" id="3.30.1140.32">
    <property type="entry name" value="Ribosomal protein S3, C-terminal domain"/>
    <property type="match status" value="1"/>
</dbReference>
<dbReference type="HAMAP" id="MF_01309_B">
    <property type="entry name" value="Ribosomal_uS3_B"/>
    <property type="match status" value="1"/>
</dbReference>
<dbReference type="InterPro" id="IPR004087">
    <property type="entry name" value="KH_dom"/>
</dbReference>
<dbReference type="InterPro" id="IPR015946">
    <property type="entry name" value="KH_dom-like_a/b"/>
</dbReference>
<dbReference type="InterPro" id="IPR004044">
    <property type="entry name" value="KH_dom_type_2"/>
</dbReference>
<dbReference type="InterPro" id="IPR009019">
    <property type="entry name" value="KH_sf_prok-type"/>
</dbReference>
<dbReference type="InterPro" id="IPR036419">
    <property type="entry name" value="Ribosomal_S3_C_sf"/>
</dbReference>
<dbReference type="InterPro" id="IPR005704">
    <property type="entry name" value="Ribosomal_uS3_bac-typ"/>
</dbReference>
<dbReference type="InterPro" id="IPR001351">
    <property type="entry name" value="Ribosomal_uS3_C"/>
</dbReference>
<dbReference type="InterPro" id="IPR018280">
    <property type="entry name" value="Ribosomal_uS3_CS"/>
</dbReference>
<dbReference type="NCBIfam" id="TIGR01009">
    <property type="entry name" value="rpsC_bact"/>
    <property type="match status" value="1"/>
</dbReference>
<dbReference type="PANTHER" id="PTHR11760">
    <property type="entry name" value="30S/40S RIBOSOMAL PROTEIN S3"/>
    <property type="match status" value="1"/>
</dbReference>
<dbReference type="PANTHER" id="PTHR11760:SF19">
    <property type="entry name" value="SMALL RIBOSOMAL SUBUNIT PROTEIN US3C"/>
    <property type="match status" value="1"/>
</dbReference>
<dbReference type="Pfam" id="PF07650">
    <property type="entry name" value="KH_2"/>
    <property type="match status" value="1"/>
</dbReference>
<dbReference type="Pfam" id="PF00189">
    <property type="entry name" value="Ribosomal_S3_C"/>
    <property type="match status" value="1"/>
</dbReference>
<dbReference type="SMART" id="SM00322">
    <property type="entry name" value="KH"/>
    <property type="match status" value="1"/>
</dbReference>
<dbReference type="SUPFAM" id="SSF54814">
    <property type="entry name" value="Prokaryotic type KH domain (KH-domain type II)"/>
    <property type="match status" value="1"/>
</dbReference>
<dbReference type="SUPFAM" id="SSF54821">
    <property type="entry name" value="Ribosomal protein S3 C-terminal domain"/>
    <property type="match status" value="1"/>
</dbReference>
<dbReference type="PROSITE" id="PS50823">
    <property type="entry name" value="KH_TYPE_2"/>
    <property type="match status" value="1"/>
</dbReference>
<dbReference type="PROSITE" id="PS00548">
    <property type="entry name" value="RIBOSOMAL_S3"/>
    <property type="match status" value="1"/>
</dbReference>
<proteinExistence type="inferred from homology"/>
<protein>
    <recommendedName>
        <fullName evidence="1">Small ribosomal subunit protein uS3</fullName>
    </recommendedName>
    <alternativeName>
        <fullName evidence="2">30S ribosomal protein S3</fullName>
    </alternativeName>
</protein>
<evidence type="ECO:0000255" key="1">
    <source>
        <dbReference type="HAMAP-Rule" id="MF_01309"/>
    </source>
</evidence>
<evidence type="ECO:0000305" key="2"/>
<name>RS3_ANADE</name>
<accession>Q2IJ82</accession>
<organism>
    <name type="scientific">Anaeromyxobacter dehalogenans (strain 2CP-C)</name>
    <dbReference type="NCBI Taxonomy" id="290397"/>
    <lineage>
        <taxon>Bacteria</taxon>
        <taxon>Pseudomonadati</taxon>
        <taxon>Myxococcota</taxon>
        <taxon>Myxococcia</taxon>
        <taxon>Myxococcales</taxon>
        <taxon>Cystobacterineae</taxon>
        <taxon>Anaeromyxobacteraceae</taxon>
        <taxon>Anaeromyxobacter</taxon>
    </lineage>
</organism>
<comment type="function">
    <text evidence="1">Binds the lower part of the 30S subunit head. Binds mRNA in the 70S ribosome, positioning it for translation.</text>
</comment>
<comment type="subunit">
    <text evidence="1">Part of the 30S ribosomal subunit. Forms a tight complex with proteins S10 and S14.</text>
</comment>
<comment type="similarity">
    <text evidence="1">Belongs to the universal ribosomal protein uS3 family.</text>
</comment>
<sequence length="224" mass="25163">MGQKVHPIGFRLGVIRSWDSKWYEEKNYAKWLHEDIKLREFVKEKLGQAGISRIEIERAANKVKINVHTARPGIVIGKRGAGIETIKKDLQGLTDNEVYLNVVEVRKAETDAQLVAENIATQLERRIAFRRAMKKSVQTALKFGAKGIRVACSGRLGGSEMARYEWYREGRVPLHTLRADIDYGFAEAKTTYGKIGCKVWIMRGEVLPQSAGARAPRTTGGARP</sequence>
<gene>
    <name evidence="1" type="primary">rpsC</name>
    <name type="ordered locus">Adeh_1940</name>
</gene>
<feature type="chain" id="PRO_0000293748" description="Small ribosomal subunit protein uS3">
    <location>
        <begin position="1"/>
        <end position="224"/>
    </location>
</feature>
<feature type="domain" description="KH type-2" evidence="1">
    <location>
        <begin position="38"/>
        <end position="106"/>
    </location>
</feature>
<reference key="1">
    <citation type="submission" date="2006-01" db="EMBL/GenBank/DDBJ databases">
        <title>Complete sequence of Anaeromyxobacter dehalogenans 2CP-C.</title>
        <authorList>
            <person name="Copeland A."/>
            <person name="Lucas S."/>
            <person name="Lapidus A."/>
            <person name="Barry K."/>
            <person name="Detter J.C."/>
            <person name="Glavina T."/>
            <person name="Hammon N."/>
            <person name="Israni S."/>
            <person name="Pitluck S."/>
            <person name="Brettin T."/>
            <person name="Bruce D."/>
            <person name="Han C."/>
            <person name="Tapia R."/>
            <person name="Gilna P."/>
            <person name="Kiss H."/>
            <person name="Schmutz J."/>
            <person name="Larimer F."/>
            <person name="Land M."/>
            <person name="Kyrpides N."/>
            <person name="Anderson I."/>
            <person name="Sanford R.A."/>
            <person name="Ritalahti K.M."/>
            <person name="Thomas H.S."/>
            <person name="Kirby J.R."/>
            <person name="Zhulin I.B."/>
            <person name="Loeffler F.E."/>
            <person name="Richardson P."/>
        </authorList>
    </citation>
    <scope>NUCLEOTIDE SEQUENCE [LARGE SCALE GENOMIC DNA]</scope>
    <source>
        <strain>2CP-C</strain>
    </source>
</reference>
<keyword id="KW-1185">Reference proteome</keyword>
<keyword id="KW-0687">Ribonucleoprotein</keyword>
<keyword id="KW-0689">Ribosomal protein</keyword>
<keyword id="KW-0694">RNA-binding</keyword>
<keyword id="KW-0699">rRNA-binding</keyword>